<accession>Q7NFF2</accession>
<evidence type="ECO:0000255" key="1">
    <source>
        <dbReference type="HAMAP-Rule" id="MF_01315"/>
    </source>
</evidence>
<evidence type="ECO:0000256" key="2">
    <source>
        <dbReference type="SAM" id="MobiDB-lite"/>
    </source>
</evidence>
<evidence type="ECO:0000305" key="3"/>
<organism>
    <name type="scientific">Gloeobacter violaceus (strain ATCC 29082 / PCC 7421)</name>
    <dbReference type="NCBI Taxonomy" id="251221"/>
    <lineage>
        <taxon>Bacteria</taxon>
        <taxon>Bacillati</taxon>
        <taxon>Cyanobacteriota</taxon>
        <taxon>Cyanophyceae</taxon>
        <taxon>Gloeobacterales</taxon>
        <taxon>Gloeobacteraceae</taxon>
        <taxon>Gloeobacter</taxon>
    </lineage>
</organism>
<keyword id="KW-1185">Reference proteome</keyword>
<keyword id="KW-0687">Ribonucleoprotein</keyword>
<keyword id="KW-0689">Ribosomal protein</keyword>
<keyword id="KW-0694">RNA-binding</keyword>
<keyword id="KW-0699">rRNA-binding</keyword>
<keyword id="KW-0820">tRNA-binding</keyword>
<dbReference type="EMBL" id="BA000045">
    <property type="protein sequence ID" value="BAC91515.1"/>
    <property type="molecule type" value="Genomic_DNA"/>
</dbReference>
<dbReference type="RefSeq" id="NP_926520.1">
    <property type="nucleotide sequence ID" value="NC_005125.1"/>
</dbReference>
<dbReference type="RefSeq" id="WP_011143563.1">
    <property type="nucleotide sequence ID" value="NC_005125.1"/>
</dbReference>
<dbReference type="SMR" id="Q7NFF2"/>
<dbReference type="FunCoup" id="Q7NFF2">
    <property type="interactions" value="397"/>
</dbReference>
<dbReference type="STRING" id="251221.gene:10761089"/>
<dbReference type="EnsemblBacteria" id="BAC91515">
    <property type="protein sequence ID" value="BAC91515"/>
    <property type="gene ID" value="BAC91515"/>
</dbReference>
<dbReference type="KEGG" id="gvi:gll3574"/>
<dbReference type="PATRIC" id="fig|251221.4.peg.3607"/>
<dbReference type="eggNOG" id="COG0099">
    <property type="taxonomic scope" value="Bacteria"/>
</dbReference>
<dbReference type="HOGENOM" id="CLU_103849_1_2_3"/>
<dbReference type="InParanoid" id="Q7NFF2"/>
<dbReference type="OrthoDB" id="9803610at2"/>
<dbReference type="PhylomeDB" id="Q7NFF2"/>
<dbReference type="Proteomes" id="UP000000557">
    <property type="component" value="Chromosome"/>
</dbReference>
<dbReference type="GO" id="GO:0005829">
    <property type="term" value="C:cytosol"/>
    <property type="evidence" value="ECO:0000318"/>
    <property type="project" value="GO_Central"/>
</dbReference>
<dbReference type="GO" id="GO:0015935">
    <property type="term" value="C:small ribosomal subunit"/>
    <property type="evidence" value="ECO:0000318"/>
    <property type="project" value="GO_Central"/>
</dbReference>
<dbReference type="GO" id="GO:0019843">
    <property type="term" value="F:rRNA binding"/>
    <property type="evidence" value="ECO:0007669"/>
    <property type="project" value="UniProtKB-UniRule"/>
</dbReference>
<dbReference type="GO" id="GO:0003735">
    <property type="term" value="F:structural constituent of ribosome"/>
    <property type="evidence" value="ECO:0007669"/>
    <property type="project" value="InterPro"/>
</dbReference>
<dbReference type="GO" id="GO:0000049">
    <property type="term" value="F:tRNA binding"/>
    <property type="evidence" value="ECO:0007669"/>
    <property type="project" value="UniProtKB-UniRule"/>
</dbReference>
<dbReference type="GO" id="GO:0006412">
    <property type="term" value="P:translation"/>
    <property type="evidence" value="ECO:0007669"/>
    <property type="project" value="UniProtKB-UniRule"/>
</dbReference>
<dbReference type="FunFam" id="1.10.8.50:FF:000001">
    <property type="entry name" value="30S ribosomal protein S13"/>
    <property type="match status" value="1"/>
</dbReference>
<dbReference type="FunFam" id="4.10.910.10:FF:000001">
    <property type="entry name" value="30S ribosomal protein S13"/>
    <property type="match status" value="1"/>
</dbReference>
<dbReference type="Gene3D" id="1.10.8.50">
    <property type="match status" value="1"/>
</dbReference>
<dbReference type="Gene3D" id="4.10.910.10">
    <property type="entry name" value="30s ribosomal protein s13, domain 2"/>
    <property type="match status" value="1"/>
</dbReference>
<dbReference type="HAMAP" id="MF_01315">
    <property type="entry name" value="Ribosomal_uS13"/>
    <property type="match status" value="1"/>
</dbReference>
<dbReference type="InterPro" id="IPR027437">
    <property type="entry name" value="Rbsml_uS13_C"/>
</dbReference>
<dbReference type="InterPro" id="IPR001892">
    <property type="entry name" value="Ribosomal_uS13"/>
</dbReference>
<dbReference type="InterPro" id="IPR010979">
    <property type="entry name" value="Ribosomal_uS13-like_H2TH"/>
</dbReference>
<dbReference type="InterPro" id="IPR019980">
    <property type="entry name" value="Ribosomal_uS13_bac-type"/>
</dbReference>
<dbReference type="InterPro" id="IPR018269">
    <property type="entry name" value="Ribosomal_uS13_CS"/>
</dbReference>
<dbReference type="NCBIfam" id="TIGR03631">
    <property type="entry name" value="uS13_bact"/>
    <property type="match status" value="1"/>
</dbReference>
<dbReference type="PANTHER" id="PTHR10871">
    <property type="entry name" value="30S RIBOSOMAL PROTEIN S13/40S RIBOSOMAL PROTEIN S18"/>
    <property type="match status" value="1"/>
</dbReference>
<dbReference type="PANTHER" id="PTHR10871:SF1">
    <property type="entry name" value="SMALL RIBOSOMAL SUBUNIT PROTEIN US13M"/>
    <property type="match status" value="1"/>
</dbReference>
<dbReference type="Pfam" id="PF00416">
    <property type="entry name" value="Ribosomal_S13"/>
    <property type="match status" value="1"/>
</dbReference>
<dbReference type="PIRSF" id="PIRSF002134">
    <property type="entry name" value="Ribosomal_S13"/>
    <property type="match status" value="1"/>
</dbReference>
<dbReference type="SUPFAM" id="SSF46946">
    <property type="entry name" value="S13-like H2TH domain"/>
    <property type="match status" value="1"/>
</dbReference>
<dbReference type="PROSITE" id="PS00646">
    <property type="entry name" value="RIBOSOMAL_S13_1"/>
    <property type="match status" value="1"/>
</dbReference>
<dbReference type="PROSITE" id="PS50159">
    <property type="entry name" value="RIBOSOMAL_S13_2"/>
    <property type="match status" value="1"/>
</dbReference>
<gene>
    <name evidence="1" type="primary">rpsM</name>
    <name evidence="1" type="synonym">rps13</name>
    <name type="ordered locus">gll3574</name>
</gene>
<reference key="1">
    <citation type="journal article" date="2003" name="DNA Res.">
        <title>Complete genome structure of Gloeobacter violaceus PCC 7421, a cyanobacterium that lacks thylakoids.</title>
        <authorList>
            <person name="Nakamura Y."/>
            <person name="Kaneko T."/>
            <person name="Sato S."/>
            <person name="Mimuro M."/>
            <person name="Miyashita H."/>
            <person name="Tsuchiya T."/>
            <person name="Sasamoto S."/>
            <person name="Watanabe A."/>
            <person name="Kawashima K."/>
            <person name="Kishida Y."/>
            <person name="Kiyokawa C."/>
            <person name="Kohara M."/>
            <person name="Matsumoto M."/>
            <person name="Matsuno A."/>
            <person name="Nakazaki N."/>
            <person name="Shimpo S."/>
            <person name="Takeuchi C."/>
            <person name="Yamada M."/>
            <person name="Tabata S."/>
        </authorList>
    </citation>
    <scope>NUCLEOTIDE SEQUENCE [LARGE SCALE GENOMIC DNA]</scope>
    <source>
        <strain>ATCC 29082 / PCC 7421</strain>
    </source>
</reference>
<proteinExistence type="inferred from homology"/>
<name>RS13_GLOVI</name>
<comment type="function">
    <text evidence="1">Located at the top of the head of the 30S subunit, it contacts several helices of the 16S rRNA. In the 70S ribosome it contacts the 23S rRNA (bridge B1a) and protein L5 of the 50S subunit (bridge B1b), connecting the 2 subunits; these bridges are implicated in subunit movement. Contacts the tRNAs in the A and P-sites.</text>
</comment>
<comment type="subunit">
    <text evidence="1">Part of the 30S ribosomal subunit. Forms a loose heterodimer with protein S19. Forms two bridges to the 50S subunit in the 70S ribosome.</text>
</comment>
<comment type="similarity">
    <text evidence="1">Belongs to the universal ribosomal protein uS13 family.</text>
</comment>
<protein>
    <recommendedName>
        <fullName evidence="1">Small ribosomal subunit protein uS13</fullName>
    </recommendedName>
    <alternativeName>
        <fullName evidence="3">30S ribosomal protein S13</fullName>
    </alternativeName>
</protein>
<feature type="chain" id="PRO_0000230511" description="Small ribosomal subunit protein uS13">
    <location>
        <begin position="1"/>
        <end position="127"/>
    </location>
</feature>
<feature type="region of interest" description="Disordered" evidence="2">
    <location>
        <begin position="97"/>
        <end position="127"/>
    </location>
</feature>
<feature type="compositionally biased region" description="Basic residues" evidence="2">
    <location>
        <begin position="101"/>
        <end position="127"/>
    </location>
</feature>
<sequence length="127" mass="14458">MARIAGVDIPREKRVEIALTYIFGIGPSRATQILLSTGINPNLRVRELTDVQVSLLREEIEQKYQVEGDLRRFENINIKRLMDIGCLRGRRHRLGLPVRGQRTRTNARTRRGGRKTVAGKKKAAAKK</sequence>